<gene>
    <name evidence="1" type="primary">speA</name>
    <name type="ordered locus">swp_3024</name>
</gene>
<accession>B8CR70</accession>
<keyword id="KW-0210">Decarboxylase</keyword>
<keyword id="KW-0456">Lyase</keyword>
<keyword id="KW-0460">Magnesium</keyword>
<keyword id="KW-0479">Metal-binding</keyword>
<keyword id="KW-0620">Polyamine biosynthesis</keyword>
<keyword id="KW-0663">Pyridoxal phosphate</keyword>
<keyword id="KW-0745">Spermidine biosynthesis</keyword>
<organism>
    <name type="scientific">Shewanella piezotolerans (strain WP3 / JCM 13877)</name>
    <dbReference type="NCBI Taxonomy" id="225849"/>
    <lineage>
        <taxon>Bacteria</taxon>
        <taxon>Pseudomonadati</taxon>
        <taxon>Pseudomonadota</taxon>
        <taxon>Gammaproteobacteria</taxon>
        <taxon>Alteromonadales</taxon>
        <taxon>Shewanellaceae</taxon>
        <taxon>Shewanella</taxon>
    </lineage>
</organism>
<comment type="function">
    <text evidence="1">Catalyzes the biosynthesis of agmatine from arginine.</text>
</comment>
<comment type="catalytic activity">
    <reaction evidence="1">
        <text>L-arginine + H(+) = agmatine + CO2</text>
        <dbReference type="Rhea" id="RHEA:17641"/>
        <dbReference type="ChEBI" id="CHEBI:15378"/>
        <dbReference type="ChEBI" id="CHEBI:16526"/>
        <dbReference type="ChEBI" id="CHEBI:32682"/>
        <dbReference type="ChEBI" id="CHEBI:58145"/>
        <dbReference type="EC" id="4.1.1.19"/>
    </reaction>
</comment>
<comment type="cofactor">
    <cofactor evidence="1">
        <name>Mg(2+)</name>
        <dbReference type="ChEBI" id="CHEBI:18420"/>
    </cofactor>
</comment>
<comment type="cofactor">
    <cofactor evidence="1">
        <name>pyridoxal 5'-phosphate</name>
        <dbReference type="ChEBI" id="CHEBI:597326"/>
    </cofactor>
</comment>
<comment type="pathway">
    <text evidence="1">Amine and polyamine biosynthesis; agmatine biosynthesis; agmatine from L-arginine: step 1/1.</text>
</comment>
<comment type="similarity">
    <text evidence="1">Belongs to the Orn/Lys/Arg decarboxylase class-II family. SpeA subfamily.</text>
</comment>
<dbReference type="EC" id="4.1.1.19" evidence="1"/>
<dbReference type="EMBL" id="CP000472">
    <property type="protein sequence ID" value="ACJ29742.1"/>
    <property type="molecule type" value="Genomic_DNA"/>
</dbReference>
<dbReference type="RefSeq" id="WP_020913095.1">
    <property type="nucleotide sequence ID" value="NC_011566.1"/>
</dbReference>
<dbReference type="SMR" id="B8CR70"/>
<dbReference type="STRING" id="225849.swp_3024"/>
<dbReference type="KEGG" id="swp:swp_3024"/>
<dbReference type="eggNOG" id="COG1166">
    <property type="taxonomic scope" value="Bacteria"/>
</dbReference>
<dbReference type="HOGENOM" id="CLU_027243_1_0_6"/>
<dbReference type="OrthoDB" id="9802658at2"/>
<dbReference type="UniPathway" id="UPA00186">
    <property type="reaction ID" value="UER00284"/>
</dbReference>
<dbReference type="Proteomes" id="UP000000753">
    <property type="component" value="Chromosome"/>
</dbReference>
<dbReference type="GO" id="GO:0008792">
    <property type="term" value="F:arginine decarboxylase activity"/>
    <property type="evidence" value="ECO:0007669"/>
    <property type="project" value="UniProtKB-UniRule"/>
</dbReference>
<dbReference type="GO" id="GO:0046872">
    <property type="term" value="F:metal ion binding"/>
    <property type="evidence" value="ECO:0007669"/>
    <property type="project" value="UniProtKB-KW"/>
</dbReference>
<dbReference type="GO" id="GO:0006527">
    <property type="term" value="P:arginine catabolic process"/>
    <property type="evidence" value="ECO:0007669"/>
    <property type="project" value="InterPro"/>
</dbReference>
<dbReference type="GO" id="GO:0033388">
    <property type="term" value="P:putrescine biosynthetic process from arginine"/>
    <property type="evidence" value="ECO:0007669"/>
    <property type="project" value="TreeGrafter"/>
</dbReference>
<dbReference type="GO" id="GO:0008295">
    <property type="term" value="P:spermidine biosynthetic process"/>
    <property type="evidence" value="ECO:0007669"/>
    <property type="project" value="UniProtKB-UniRule"/>
</dbReference>
<dbReference type="CDD" id="cd06830">
    <property type="entry name" value="PLPDE_III_ADC"/>
    <property type="match status" value="1"/>
</dbReference>
<dbReference type="FunFam" id="1.10.287.3440:FF:000001">
    <property type="entry name" value="Biosynthetic arginine decarboxylase"/>
    <property type="match status" value="1"/>
</dbReference>
<dbReference type="FunFam" id="2.40.37.10:FF:000001">
    <property type="entry name" value="Biosynthetic arginine decarboxylase"/>
    <property type="match status" value="1"/>
</dbReference>
<dbReference type="FunFam" id="3.20.20.10:FF:000001">
    <property type="entry name" value="Biosynthetic arginine decarboxylase"/>
    <property type="match status" value="1"/>
</dbReference>
<dbReference type="Gene3D" id="1.10.287.3440">
    <property type="match status" value="1"/>
</dbReference>
<dbReference type="Gene3D" id="1.20.58.930">
    <property type="match status" value="1"/>
</dbReference>
<dbReference type="Gene3D" id="3.20.20.10">
    <property type="entry name" value="Alanine racemase"/>
    <property type="match status" value="1"/>
</dbReference>
<dbReference type="Gene3D" id="2.40.37.10">
    <property type="entry name" value="Lyase, Ornithine Decarboxylase, Chain A, domain 1"/>
    <property type="match status" value="1"/>
</dbReference>
<dbReference type="HAMAP" id="MF_01417">
    <property type="entry name" value="SpeA"/>
    <property type="match status" value="1"/>
</dbReference>
<dbReference type="InterPro" id="IPR009006">
    <property type="entry name" value="Ala_racemase/Decarboxylase_C"/>
</dbReference>
<dbReference type="InterPro" id="IPR040634">
    <property type="entry name" value="Arg_decarb_HB"/>
</dbReference>
<dbReference type="InterPro" id="IPR041128">
    <property type="entry name" value="Arg_decarbox_C"/>
</dbReference>
<dbReference type="InterPro" id="IPR002985">
    <property type="entry name" value="Arg_decrbxlase"/>
</dbReference>
<dbReference type="InterPro" id="IPR022644">
    <property type="entry name" value="De-COase2_N"/>
</dbReference>
<dbReference type="InterPro" id="IPR000183">
    <property type="entry name" value="Orn/DAP/Arg_de-COase"/>
</dbReference>
<dbReference type="InterPro" id="IPR029066">
    <property type="entry name" value="PLP-binding_barrel"/>
</dbReference>
<dbReference type="NCBIfam" id="NF003763">
    <property type="entry name" value="PRK05354.1"/>
    <property type="match status" value="1"/>
</dbReference>
<dbReference type="NCBIfam" id="TIGR01273">
    <property type="entry name" value="speA"/>
    <property type="match status" value="1"/>
</dbReference>
<dbReference type="PANTHER" id="PTHR43295">
    <property type="entry name" value="ARGININE DECARBOXYLASE"/>
    <property type="match status" value="1"/>
</dbReference>
<dbReference type="PANTHER" id="PTHR43295:SF9">
    <property type="entry name" value="BIOSYNTHETIC ARGININE DECARBOXYLASE"/>
    <property type="match status" value="1"/>
</dbReference>
<dbReference type="Pfam" id="PF17810">
    <property type="entry name" value="Arg_decarb_HB"/>
    <property type="match status" value="1"/>
</dbReference>
<dbReference type="Pfam" id="PF17944">
    <property type="entry name" value="Arg_decarbox_C"/>
    <property type="match status" value="1"/>
</dbReference>
<dbReference type="Pfam" id="PF02784">
    <property type="entry name" value="Orn_Arg_deC_N"/>
    <property type="match status" value="1"/>
</dbReference>
<dbReference type="PIRSF" id="PIRSF001336">
    <property type="entry name" value="Arg_decrbxlase"/>
    <property type="match status" value="1"/>
</dbReference>
<dbReference type="PRINTS" id="PR01180">
    <property type="entry name" value="ARGDCRBXLASE"/>
</dbReference>
<dbReference type="PRINTS" id="PR01179">
    <property type="entry name" value="ODADCRBXLASE"/>
</dbReference>
<dbReference type="SUPFAM" id="SSF51419">
    <property type="entry name" value="PLP-binding barrel"/>
    <property type="match status" value="1"/>
</dbReference>
<name>SPEA_SHEPW</name>
<proteinExistence type="inferred from homology"/>
<protein>
    <recommendedName>
        <fullName evidence="1">Biosynthetic arginine decarboxylase</fullName>
        <shortName evidence="1">ADC</shortName>
        <ecNumber evidence="1">4.1.1.19</ecNumber>
    </recommendedName>
</protein>
<feature type="chain" id="PRO_1000145603" description="Biosynthetic arginine decarboxylase">
    <location>
        <begin position="1"/>
        <end position="637"/>
    </location>
</feature>
<feature type="binding site" evidence="1">
    <location>
        <begin position="286"/>
        <end position="296"/>
    </location>
    <ligand>
        <name>substrate</name>
    </ligand>
</feature>
<feature type="modified residue" description="N6-(pyridoxal phosphate)lysine" evidence="1">
    <location>
        <position position="101"/>
    </location>
</feature>
<reference key="1">
    <citation type="journal article" date="2008" name="PLoS ONE">
        <title>Environmental adaptation: genomic analysis of the piezotolerant and psychrotolerant deep-sea iron reducing bacterium Shewanella piezotolerans WP3.</title>
        <authorList>
            <person name="Wang F."/>
            <person name="Wang J."/>
            <person name="Jian H."/>
            <person name="Zhang B."/>
            <person name="Li S."/>
            <person name="Wang F."/>
            <person name="Zeng X."/>
            <person name="Gao L."/>
            <person name="Bartlett D.H."/>
            <person name="Yu J."/>
            <person name="Hu S."/>
            <person name="Xiao X."/>
        </authorList>
    </citation>
    <scope>NUCLEOTIDE SEQUENCE [LARGE SCALE GENOMIC DNA]</scope>
    <source>
        <strain>WP3 / JCM 13877</strain>
    </source>
</reference>
<evidence type="ECO:0000255" key="1">
    <source>
        <dbReference type="HAMAP-Rule" id="MF_01417"/>
    </source>
</evidence>
<sequence length="637" mass="71415">MNNWSIDDARASYNVNYWSQGLYGISDEGEVTVSPDPNRPDCKIGLNELAKDMVKAGVALPVLVRFPQILHHRVNSLCQAFNQAIQKYKYEADYLLVYPIKVNQQQTVVEEILASQVEKEVPQLGLEAGSKPELLAVLAMAQKASSVIICNGYKDKEYIRLALIGEKLGHKVYIVLEKMSELKVVLEQAKELGVTPRLGLRVRLAFQGKGKWQASGGEKSKFGLSAAQVLKVIELLQHEEMLDSLELLHFHLGSQIANIRDIRQGVSEAGRFYCELMKLGAQVKCFDVGGGLAVDYDGTRSQSNNSMNYGLTEYANNIVSVLTDMCKEYEQPMPRIISESGRYLTAHHAVLLTDVIGTESYKPETILPPSEDAPLLLQNMWQSWTEVSGKADQRALIEIFHDCQSDLTEVHSLFALGQLSLADRAWAEQINLRVCHELQGSMSSKYRYHRPIIDELNEKLADKFFVNFSLFQSLPDAWGIDQVFPVMPLSGLDKAPERRAVMLDITCDSDGIVDQYVDGQGIETTLPVPAWTQESPYLIGFFLVGAYQEILGDMHNLFGDTNSAVVRVDENGRRNIDSVLEGDTVADVLRYVNLEAVSFMRTYEELVNKHIVADERSNILEELQLGLKGYTYLEDFS</sequence>